<organism>
    <name type="scientific">Oryza sativa subsp. japonica</name>
    <name type="common">Rice</name>
    <dbReference type="NCBI Taxonomy" id="39947"/>
    <lineage>
        <taxon>Eukaryota</taxon>
        <taxon>Viridiplantae</taxon>
        <taxon>Streptophyta</taxon>
        <taxon>Embryophyta</taxon>
        <taxon>Tracheophyta</taxon>
        <taxon>Spermatophyta</taxon>
        <taxon>Magnoliopsida</taxon>
        <taxon>Liliopsida</taxon>
        <taxon>Poales</taxon>
        <taxon>Poaceae</taxon>
        <taxon>BOP clade</taxon>
        <taxon>Oryzoideae</taxon>
        <taxon>Oryzeae</taxon>
        <taxon>Oryzinae</taxon>
        <taxon>Oryza</taxon>
        <taxon>Oryza sativa</taxon>
    </lineage>
</organism>
<reference key="1">
    <citation type="journal article" date="2005" name="Nature">
        <title>The map-based sequence of the rice genome.</title>
        <authorList>
            <consortium name="International rice genome sequencing project (IRGSP)"/>
        </authorList>
    </citation>
    <scope>NUCLEOTIDE SEQUENCE [LARGE SCALE GENOMIC DNA]</scope>
    <source>
        <strain>cv. Nipponbare</strain>
    </source>
</reference>
<reference key="2">
    <citation type="journal article" date="2008" name="Nucleic Acids Res.">
        <title>The rice annotation project database (RAP-DB): 2008 update.</title>
        <authorList>
            <consortium name="The rice annotation project (RAP)"/>
        </authorList>
    </citation>
    <scope>GENOME REANNOTATION</scope>
    <source>
        <strain>cv. Nipponbare</strain>
    </source>
</reference>
<reference key="3">
    <citation type="journal article" date="2013" name="Rice">
        <title>Improvement of the Oryza sativa Nipponbare reference genome using next generation sequence and optical map data.</title>
        <authorList>
            <person name="Kawahara Y."/>
            <person name="de la Bastide M."/>
            <person name="Hamilton J.P."/>
            <person name="Kanamori H."/>
            <person name="McCombie W.R."/>
            <person name="Ouyang S."/>
            <person name="Schwartz D.C."/>
            <person name="Tanaka T."/>
            <person name="Wu J."/>
            <person name="Zhou S."/>
            <person name="Childs K.L."/>
            <person name="Davidson R.M."/>
            <person name="Lin H."/>
            <person name="Quesada-Ocampo L."/>
            <person name="Vaillancourt B."/>
            <person name="Sakai H."/>
            <person name="Lee S.S."/>
            <person name="Kim J."/>
            <person name="Numa H."/>
            <person name="Itoh T."/>
            <person name="Buell C.R."/>
            <person name="Matsumoto T."/>
        </authorList>
    </citation>
    <scope>GENOME REANNOTATION</scope>
    <source>
        <strain>cv. Nipponbare</strain>
    </source>
</reference>
<reference key="4">
    <citation type="journal article" date="2002" name="Plant Physiol.">
        <title>Cellulose synthase-like genes of rice.</title>
        <authorList>
            <person name="Hazen S.P."/>
            <person name="Scott-Craig J.S."/>
            <person name="Walton J.D."/>
        </authorList>
    </citation>
    <scope>GENE FAMILY</scope>
    <scope>NOMENCLATURE</scope>
</reference>
<sequence>MSSSGGGGVAEEVARLWGELPVRVVWAAVAAQWAAAAAAARAAVVVPAVRALVAVSLAMTVMILAEKLFVAAVCLAVRAFRLRPDRRYKWLPIGAAAAAASSEDDEESGLVAAAAAFPMVLVQIPMFNEREVYKLSIGAACSLDWPSDRVVIQVLDDSTDLVVKDLVEKECQKWQGKGVNIKYEVRGNRKGYKAGALKEGLKHDYVKECEYIAMFDADFQPESDFLLRTVPFLVHNSEIALVQTRWKFVNANECLLTRFQEMSLDYHFKYEQEAGSSVYSFFGFNGTAGVWRIAAIDDAGGWKDRTTVEDMDLAVRATLQGWKFVYVGDVKVKSELPSTFKAYRFQQHRWSCGPANLFKKMMVEILENKKVSFWNKIHLWYDFFFVGKIAAHTVTFIYYCFVIPVSVWLPEIEIPLWGVVYVPTVITLCKAVGTPSSFHLVILWVLFENVMSLHRIKAAVTGILEAGRVNEWVVTEKLGDANKTKPDTNGSDAVKVIDVELTTPLIPKLKKRRTRFWDKYHYSEIFVGICIILSGFYDVLYAKKGYYIFLFIQGLAFLIVGFDYIGVCPP</sequence>
<protein>
    <recommendedName>
        <fullName evidence="4">Probable glucomannan 4-beta-mannosyltransferase 11</fullName>
        <ecNumber evidence="1">2.4.1.32</ecNumber>
    </recommendedName>
    <alternativeName>
        <fullName evidence="3">Cellulose synthase-like protein A11</fullName>
        <shortName evidence="3">OsCslA11</shortName>
    </alternativeName>
    <alternativeName>
        <fullName evidence="4">Glucomannan synthase</fullName>
    </alternativeName>
    <alternativeName>
        <fullName evidence="4">Mannan synthase 11</fullName>
    </alternativeName>
</protein>
<keyword id="KW-0961">Cell wall biogenesis/degradation</keyword>
<keyword id="KW-0328">Glycosyltransferase</keyword>
<keyword id="KW-0333">Golgi apparatus</keyword>
<keyword id="KW-0472">Membrane</keyword>
<keyword id="KW-1185">Reference proteome</keyword>
<keyword id="KW-0808">Transferase</keyword>
<keyword id="KW-0812">Transmembrane</keyword>
<keyword id="KW-1133">Transmembrane helix</keyword>
<dbReference type="EC" id="2.4.1.32" evidence="1"/>
<dbReference type="EMBL" id="AP004666">
    <property type="protein sequence ID" value="BAD09847.1"/>
    <property type="molecule type" value="Genomic_DNA"/>
</dbReference>
<dbReference type="EMBL" id="AP005757">
    <property type="protein sequence ID" value="BAD10623.1"/>
    <property type="molecule type" value="Genomic_DNA"/>
</dbReference>
<dbReference type="EMBL" id="AP008214">
    <property type="protein sequence ID" value="BAF23793.2"/>
    <property type="status" value="ALT_SEQ"/>
    <property type="molecule type" value="Genomic_DNA"/>
</dbReference>
<dbReference type="EMBL" id="AP014964">
    <property type="status" value="NOT_ANNOTATED_CDS"/>
    <property type="molecule type" value="Genomic_DNA"/>
</dbReference>
<dbReference type="RefSeq" id="XP_015648204.1">
    <property type="nucleotide sequence ID" value="XM_015792718.1"/>
</dbReference>
<dbReference type="SMR" id="Q6YWK8"/>
<dbReference type="FunCoup" id="Q6YWK8">
    <property type="interactions" value="16"/>
</dbReference>
<dbReference type="STRING" id="39947.Q6YWK8"/>
<dbReference type="CAZy" id="GT2">
    <property type="family name" value="Glycosyltransferase Family 2"/>
</dbReference>
<dbReference type="PaxDb" id="39947-Q6YWK8"/>
<dbReference type="KEGG" id="dosa:Os08g0434500"/>
<dbReference type="InParanoid" id="Q6YWK8"/>
<dbReference type="OrthoDB" id="72851at2759"/>
<dbReference type="Proteomes" id="UP000000763">
    <property type="component" value="Chromosome 8"/>
</dbReference>
<dbReference type="Proteomes" id="UP000059680">
    <property type="component" value="Chromosome 8"/>
</dbReference>
<dbReference type="GO" id="GO:0005794">
    <property type="term" value="C:Golgi apparatus"/>
    <property type="evidence" value="ECO:0000318"/>
    <property type="project" value="GO_Central"/>
</dbReference>
<dbReference type="GO" id="GO:0000139">
    <property type="term" value="C:Golgi membrane"/>
    <property type="evidence" value="ECO:0007669"/>
    <property type="project" value="UniProtKB-SubCell"/>
</dbReference>
<dbReference type="GO" id="GO:0047259">
    <property type="term" value="F:glucomannan 4-beta-mannosyltransferase activity"/>
    <property type="evidence" value="ECO:0007669"/>
    <property type="project" value="UniProtKB-EC"/>
</dbReference>
<dbReference type="GO" id="GO:0051753">
    <property type="term" value="F:mannan synthase activity"/>
    <property type="evidence" value="ECO:0000318"/>
    <property type="project" value="GO_Central"/>
</dbReference>
<dbReference type="GO" id="GO:0071555">
    <property type="term" value="P:cell wall organization"/>
    <property type="evidence" value="ECO:0007669"/>
    <property type="project" value="UniProtKB-KW"/>
</dbReference>
<dbReference type="CDD" id="cd06437">
    <property type="entry name" value="CESA_CaSu_A2"/>
    <property type="match status" value="1"/>
</dbReference>
<dbReference type="FunFam" id="3.90.550.10:FF:000015">
    <property type="entry name" value="Glucomannan 4-beta-mannosyltransferase 9"/>
    <property type="match status" value="1"/>
</dbReference>
<dbReference type="Gene3D" id="3.90.550.10">
    <property type="entry name" value="Spore Coat Polysaccharide Biosynthesis Protein SpsA, Chain A"/>
    <property type="match status" value="1"/>
</dbReference>
<dbReference type="InterPro" id="IPR001173">
    <property type="entry name" value="Glyco_trans_2-like"/>
</dbReference>
<dbReference type="InterPro" id="IPR029044">
    <property type="entry name" value="Nucleotide-diphossugar_trans"/>
</dbReference>
<dbReference type="PANTHER" id="PTHR32044:SF58">
    <property type="entry name" value="GLUCOMANNAN 4-BETA-MANNOSYLTRANSFERASE 11-RELATED"/>
    <property type="match status" value="1"/>
</dbReference>
<dbReference type="PANTHER" id="PTHR32044">
    <property type="entry name" value="GLUCOMANNAN 4-BETA-MANNOSYLTRANSFERASE 9"/>
    <property type="match status" value="1"/>
</dbReference>
<dbReference type="Pfam" id="PF13632">
    <property type="entry name" value="Glyco_trans_2_3"/>
    <property type="match status" value="1"/>
</dbReference>
<dbReference type="SUPFAM" id="SSF53448">
    <property type="entry name" value="Nucleotide-diphospho-sugar transferases"/>
    <property type="match status" value="1"/>
</dbReference>
<comment type="function">
    <text evidence="1">Probable mannan synthase which consists of a 4-beta-mannosyltransferase activity on mannan using GDP-mannose. The beta-1,4-mannan product is the backbone for galactomannan synthesis by galactomannan galactosyltransferase. Galactomannan is a noncellulosic polysaccharides of plant cell wall.</text>
</comment>
<comment type="catalytic activity">
    <reaction evidence="1">
        <text>GDP-mannose + (glucomannan)n = GDP + (glucomannan)n+1.</text>
        <dbReference type="EC" id="2.4.1.32"/>
    </reaction>
</comment>
<comment type="subcellular location">
    <subcellularLocation>
        <location evidence="4">Golgi apparatus membrane</location>
        <topology evidence="4">Multi-pass membrane protein</topology>
    </subcellularLocation>
</comment>
<comment type="similarity">
    <text evidence="4">Belongs to the glycosyltransferase 2 family. Plant cellulose synthase-like A subfamily.</text>
</comment>
<comment type="sequence caution" evidence="4">
    <conflict type="erroneous gene model prediction">
        <sequence resource="EMBL-CDS" id="BAF23793"/>
    </conflict>
</comment>
<name>CSLAB_ORYSJ</name>
<evidence type="ECO:0000250" key="1">
    <source>
        <dbReference type="UniProtKB" id="Q7PC76"/>
    </source>
</evidence>
<evidence type="ECO:0000255" key="2"/>
<evidence type="ECO:0000303" key="3">
    <source>
    </source>
</evidence>
<evidence type="ECO:0000305" key="4"/>
<gene>
    <name evidence="3" type="primary">CSLA11</name>
    <name type="ordered locus">Os08g0434500</name>
    <name type="ordered locus">LOC_Os08g33740</name>
    <name type="ORF">P0413H11.13</name>
    <name type="ORF">P0431A03.35</name>
</gene>
<feature type="chain" id="PRO_0000319380" description="Probable glucomannan 4-beta-mannosyltransferase 11">
    <location>
        <begin position="1"/>
        <end position="570"/>
    </location>
</feature>
<feature type="transmembrane region" description="Helical" evidence="2">
    <location>
        <begin position="57"/>
        <end position="77"/>
    </location>
</feature>
<feature type="transmembrane region" description="Helical" evidence="2">
    <location>
        <begin position="389"/>
        <end position="409"/>
    </location>
</feature>
<feature type="transmembrane region" description="Helical" evidence="2">
    <location>
        <begin position="412"/>
        <end position="432"/>
    </location>
</feature>
<feature type="transmembrane region" description="Helical" evidence="2">
    <location>
        <begin position="522"/>
        <end position="542"/>
    </location>
</feature>
<feature type="transmembrane region" description="Helical" evidence="2">
    <location>
        <begin position="548"/>
        <end position="568"/>
    </location>
</feature>
<feature type="active site" evidence="2">
    <location>
        <position position="157"/>
    </location>
</feature>
<feature type="active site" evidence="2">
    <location>
        <position position="310"/>
    </location>
</feature>
<feature type="binding site" evidence="2">
    <location>
        <position position="216"/>
    </location>
    <ligand>
        <name>substrate</name>
    </ligand>
</feature>
<feature type="binding site" evidence="2">
    <location>
        <position position="218"/>
    </location>
    <ligand>
        <name>substrate</name>
    </ligand>
</feature>
<proteinExistence type="evidence at transcript level"/>
<accession>Q6YWK8</accession>
<accession>Q0J5H2</accession>